<sequence>MAILGLGTDIVEIARIEAVISRSGERLARRVLSDNEWDIWETHQQPVRFLAKRFAVKEAAAKAFGTGIRNGLAFNQFEVFNDELGKPRLRLWGEALILAEKLGVAHMHVTLADERHYACATVILES</sequence>
<feature type="chain" id="PRO_1000075658" description="Holo-[acyl-carrier-protein] synthase">
    <location>
        <begin position="1"/>
        <end position="126"/>
    </location>
</feature>
<feature type="binding site" evidence="1">
    <location>
        <position position="9"/>
    </location>
    <ligand>
        <name>Mg(2+)</name>
        <dbReference type="ChEBI" id="CHEBI:18420"/>
    </ligand>
</feature>
<feature type="binding site" evidence="1">
    <location>
        <position position="58"/>
    </location>
    <ligand>
        <name>Mg(2+)</name>
        <dbReference type="ChEBI" id="CHEBI:18420"/>
    </ligand>
</feature>
<protein>
    <recommendedName>
        <fullName evidence="1">Holo-[acyl-carrier-protein] synthase</fullName>
        <shortName evidence="1">Holo-ACP synthase</shortName>
        <ecNumber evidence="1">2.7.8.7</ecNumber>
    </recommendedName>
    <alternativeName>
        <fullName evidence="1">4'-phosphopantetheinyl transferase AcpS</fullName>
    </alternativeName>
</protein>
<name>ACPS_SALPB</name>
<comment type="function">
    <text evidence="1">Transfers the 4'-phosphopantetheine moiety from coenzyme A to a Ser of acyl-carrier-protein.</text>
</comment>
<comment type="catalytic activity">
    <reaction evidence="1">
        <text>apo-[ACP] + CoA = holo-[ACP] + adenosine 3',5'-bisphosphate + H(+)</text>
        <dbReference type="Rhea" id="RHEA:12068"/>
        <dbReference type="Rhea" id="RHEA-COMP:9685"/>
        <dbReference type="Rhea" id="RHEA-COMP:9690"/>
        <dbReference type="ChEBI" id="CHEBI:15378"/>
        <dbReference type="ChEBI" id="CHEBI:29999"/>
        <dbReference type="ChEBI" id="CHEBI:57287"/>
        <dbReference type="ChEBI" id="CHEBI:58343"/>
        <dbReference type="ChEBI" id="CHEBI:64479"/>
        <dbReference type="EC" id="2.7.8.7"/>
    </reaction>
</comment>
<comment type="cofactor">
    <cofactor evidence="1">
        <name>Mg(2+)</name>
        <dbReference type="ChEBI" id="CHEBI:18420"/>
    </cofactor>
</comment>
<comment type="subcellular location">
    <subcellularLocation>
        <location evidence="1">Cytoplasm</location>
    </subcellularLocation>
</comment>
<comment type="similarity">
    <text evidence="1">Belongs to the P-Pant transferase superfamily. AcpS family.</text>
</comment>
<proteinExistence type="inferred from homology"/>
<keyword id="KW-0963">Cytoplasm</keyword>
<keyword id="KW-0275">Fatty acid biosynthesis</keyword>
<keyword id="KW-0276">Fatty acid metabolism</keyword>
<keyword id="KW-0444">Lipid biosynthesis</keyword>
<keyword id="KW-0443">Lipid metabolism</keyword>
<keyword id="KW-0460">Magnesium</keyword>
<keyword id="KW-0479">Metal-binding</keyword>
<keyword id="KW-0808">Transferase</keyword>
<accession>A9N1T5</accession>
<organism>
    <name type="scientific">Salmonella paratyphi B (strain ATCC BAA-1250 / SPB7)</name>
    <dbReference type="NCBI Taxonomy" id="1016998"/>
    <lineage>
        <taxon>Bacteria</taxon>
        <taxon>Pseudomonadati</taxon>
        <taxon>Pseudomonadota</taxon>
        <taxon>Gammaproteobacteria</taxon>
        <taxon>Enterobacterales</taxon>
        <taxon>Enterobacteriaceae</taxon>
        <taxon>Salmonella</taxon>
    </lineage>
</organism>
<reference key="1">
    <citation type="submission" date="2007-11" db="EMBL/GenBank/DDBJ databases">
        <authorList>
            <consortium name="The Salmonella enterica serovar Paratyphi B Genome Sequencing Project"/>
            <person name="McClelland M."/>
            <person name="Sanderson E.K."/>
            <person name="Porwollik S."/>
            <person name="Spieth J."/>
            <person name="Clifton W.S."/>
            <person name="Fulton R."/>
            <person name="Cordes M."/>
            <person name="Wollam A."/>
            <person name="Shah N."/>
            <person name="Pepin K."/>
            <person name="Bhonagiri V."/>
            <person name="Nash W."/>
            <person name="Johnson M."/>
            <person name="Thiruvilangam P."/>
            <person name="Wilson R."/>
        </authorList>
    </citation>
    <scope>NUCLEOTIDE SEQUENCE [LARGE SCALE GENOMIC DNA]</scope>
    <source>
        <strain>ATCC BAA-1250 / SPB7</strain>
    </source>
</reference>
<evidence type="ECO:0000255" key="1">
    <source>
        <dbReference type="HAMAP-Rule" id="MF_00101"/>
    </source>
</evidence>
<gene>
    <name evidence="1" type="primary">acpS</name>
    <name type="ordered locus">SPAB_00349</name>
</gene>
<dbReference type="EC" id="2.7.8.7" evidence="1"/>
<dbReference type="EMBL" id="CP000886">
    <property type="protein sequence ID" value="ABX65785.1"/>
    <property type="molecule type" value="Genomic_DNA"/>
</dbReference>
<dbReference type="RefSeq" id="WP_000986044.1">
    <property type="nucleotide sequence ID" value="NC_010102.1"/>
</dbReference>
<dbReference type="SMR" id="A9N1T5"/>
<dbReference type="KEGG" id="spq:SPAB_00349"/>
<dbReference type="PATRIC" id="fig|1016998.12.peg.331"/>
<dbReference type="HOGENOM" id="CLU_089696_3_1_6"/>
<dbReference type="BioCyc" id="SENT1016998:SPAB_RS01430-MONOMER"/>
<dbReference type="Proteomes" id="UP000008556">
    <property type="component" value="Chromosome"/>
</dbReference>
<dbReference type="GO" id="GO:0005737">
    <property type="term" value="C:cytoplasm"/>
    <property type="evidence" value="ECO:0007669"/>
    <property type="project" value="UniProtKB-SubCell"/>
</dbReference>
<dbReference type="GO" id="GO:0008897">
    <property type="term" value="F:holo-[acyl-carrier-protein] synthase activity"/>
    <property type="evidence" value="ECO:0007669"/>
    <property type="project" value="UniProtKB-UniRule"/>
</dbReference>
<dbReference type="GO" id="GO:0000287">
    <property type="term" value="F:magnesium ion binding"/>
    <property type="evidence" value="ECO:0007669"/>
    <property type="project" value="UniProtKB-UniRule"/>
</dbReference>
<dbReference type="GO" id="GO:0006633">
    <property type="term" value="P:fatty acid biosynthetic process"/>
    <property type="evidence" value="ECO:0007669"/>
    <property type="project" value="UniProtKB-UniRule"/>
</dbReference>
<dbReference type="FunFam" id="3.90.470.20:FF:000001">
    <property type="entry name" value="Holo-[acyl-carrier-protein] synthase"/>
    <property type="match status" value="1"/>
</dbReference>
<dbReference type="Gene3D" id="3.90.470.20">
    <property type="entry name" value="4'-phosphopantetheinyl transferase domain"/>
    <property type="match status" value="1"/>
</dbReference>
<dbReference type="HAMAP" id="MF_00101">
    <property type="entry name" value="AcpS"/>
    <property type="match status" value="1"/>
</dbReference>
<dbReference type="InterPro" id="IPR008278">
    <property type="entry name" value="4-PPantetheinyl_Trfase_dom"/>
</dbReference>
<dbReference type="InterPro" id="IPR037143">
    <property type="entry name" value="4-PPantetheinyl_Trfase_dom_sf"/>
</dbReference>
<dbReference type="InterPro" id="IPR002582">
    <property type="entry name" value="ACPS"/>
</dbReference>
<dbReference type="InterPro" id="IPR004568">
    <property type="entry name" value="Ppantetheine-prot_Trfase_dom"/>
</dbReference>
<dbReference type="NCBIfam" id="TIGR00516">
    <property type="entry name" value="acpS"/>
    <property type="match status" value="1"/>
</dbReference>
<dbReference type="NCBIfam" id="TIGR00556">
    <property type="entry name" value="pantethn_trn"/>
    <property type="match status" value="1"/>
</dbReference>
<dbReference type="Pfam" id="PF01648">
    <property type="entry name" value="ACPS"/>
    <property type="match status" value="1"/>
</dbReference>
<dbReference type="SUPFAM" id="SSF56214">
    <property type="entry name" value="4'-phosphopantetheinyl transferase"/>
    <property type="match status" value="1"/>
</dbReference>